<protein>
    <recommendedName>
        <fullName>Uncharacterized protein TP_0173</fullName>
    </recommendedName>
</protein>
<comment type="subcellular location">
    <subcellularLocation>
        <location evidence="3">Cell membrane</location>
        <topology evidence="3">Multi-pass membrane protein</topology>
    </subcellularLocation>
</comment>
<keyword id="KW-1003">Cell membrane</keyword>
<keyword id="KW-0472">Membrane</keyword>
<keyword id="KW-1185">Reference proteome</keyword>
<keyword id="KW-0812">Transmembrane</keyword>
<keyword id="KW-1133">Transmembrane helix</keyword>
<gene>
    <name type="ordered locus">TP_0173</name>
</gene>
<organism>
    <name type="scientific">Treponema pallidum (strain Nichols)</name>
    <dbReference type="NCBI Taxonomy" id="243276"/>
    <lineage>
        <taxon>Bacteria</taxon>
        <taxon>Pseudomonadati</taxon>
        <taxon>Spirochaetota</taxon>
        <taxon>Spirochaetia</taxon>
        <taxon>Spirochaetales</taxon>
        <taxon>Treponemataceae</taxon>
        <taxon>Treponema</taxon>
    </lineage>
</organism>
<name>Y173_TREPA</name>
<reference key="1">
    <citation type="journal article" date="1998" name="Science">
        <title>Complete genome sequence of Treponema pallidum, the syphilis spirochete.</title>
        <authorList>
            <person name="Fraser C.M."/>
            <person name="Norris S.J."/>
            <person name="Weinstock G.M."/>
            <person name="White O."/>
            <person name="Sutton G.G."/>
            <person name="Dodson R.J."/>
            <person name="Gwinn M.L."/>
            <person name="Hickey E.K."/>
            <person name="Clayton R.A."/>
            <person name="Ketchum K.A."/>
            <person name="Sodergren E."/>
            <person name="Hardham J.M."/>
            <person name="McLeod M.P."/>
            <person name="Salzberg S.L."/>
            <person name="Peterson J.D."/>
            <person name="Khalak H.G."/>
            <person name="Richardson D.L."/>
            <person name="Howell J.K."/>
            <person name="Chidambaram M."/>
            <person name="Utterback T.R."/>
            <person name="McDonald L.A."/>
            <person name="Artiach P."/>
            <person name="Bowman C."/>
            <person name="Cotton M.D."/>
            <person name="Fujii C."/>
            <person name="Garland S.A."/>
            <person name="Hatch B."/>
            <person name="Horst K."/>
            <person name="Roberts K.M."/>
            <person name="Sandusky M."/>
            <person name="Weidman J.F."/>
            <person name="Smith H.O."/>
            <person name="Venter J.C."/>
        </authorList>
    </citation>
    <scope>NUCLEOTIDE SEQUENCE [LARGE SCALE GENOMIC DNA]</scope>
    <source>
        <strain>Nichols</strain>
    </source>
</reference>
<proteinExistence type="predicted"/>
<dbReference type="EMBL" id="AE000520">
    <property type="protein sequence ID" value="AAC65163.1"/>
    <property type="molecule type" value="Genomic_DNA"/>
</dbReference>
<dbReference type="PIR" id="B71358">
    <property type="entry name" value="B71358"/>
</dbReference>
<dbReference type="RefSeq" id="WP_010881620.1">
    <property type="nucleotide sequence ID" value="NC_000919.1"/>
</dbReference>
<dbReference type="SMR" id="O83203"/>
<dbReference type="STRING" id="243276.TP_0173"/>
<dbReference type="EnsemblBacteria" id="AAC65163">
    <property type="protein sequence ID" value="AAC65163"/>
    <property type="gene ID" value="TP_0173"/>
</dbReference>
<dbReference type="KEGG" id="tpa:TP_0173"/>
<dbReference type="eggNOG" id="COG2199">
    <property type="taxonomic scope" value="Bacteria"/>
</dbReference>
<dbReference type="HOGENOM" id="CLU_1219262_0_0_12"/>
<dbReference type="Proteomes" id="UP000000811">
    <property type="component" value="Chromosome"/>
</dbReference>
<dbReference type="GO" id="GO:0005886">
    <property type="term" value="C:plasma membrane"/>
    <property type="evidence" value="ECO:0007669"/>
    <property type="project" value="UniProtKB-SubCell"/>
</dbReference>
<accession>O83203</accession>
<evidence type="ECO:0000255" key="1"/>
<evidence type="ECO:0000256" key="2">
    <source>
        <dbReference type="SAM" id="MobiDB-lite"/>
    </source>
</evidence>
<evidence type="ECO:0000305" key="3"/>
<sequence length="227" mass="25261">MYFAILGTMSRTCVRAYAVFAIAIMVLTVAWFAFSISQAIQRNTVGAQQRFAQVIRRIAPRVTSKRQLTDAEADFIQNLCKNDDLIMALNIFSNRVQLFSWTYDDLMFVAGGGSELVPRSSSLFIKIFSGRVPYQAKDECLLFTAALRVLTPANIFFRGCVVFLVMLTLTISSMVFLVIEYLSVRRFQCAQGDARPRPAGPQGTARSRTDEAQVSPGTPPECPVSVF</sequence>
<feature type="chain" id="PRO_0000202205" description="Uncharacterized protein TP_0173">
    <location>
        <begin position="1"/>
        <end position="227"/>
    </location>
</feature>
<feature type="transmembrane region" description="Helical" evidence="1">
    <location>
        <begin position="13"/>
        <end position="35"/>
    </location>
</feature>
<feature type="transmembrane region" description="Helical" evidence="1">
    <location>
        <begin position="155"/>
        <end position="177"/>
    </location>
</feature>
<feature type="region of interest" description="Disordered" evidence="2">
    <location>
        <begin position="192"/>
        <end position="227"/>
    </location>
</feature>
<feature type="compositionally biased region" description="Pro residues" evidence="2">
    <location>
        <begin position="217"/>
        <end position="227"/>
    </location>
</feature>